<gene>
    <name type="primary">pemtB</name>
    <name type="ORF">DDB_G0289645</name>
</gene>
<sequence length="200" mass="22416">MEKGLSSDLIIAFVAIVLHVVNYNVTAQFEYKTRYFTKLIGRNAIYYYAVFLIISALIRDHFINVAVLSDKDSIILFPTEIANMIGDSCFIFGILLNIWTLKALGIKGMYNGDSFGHIMDSPVTGGPYQFFSDPQYVGTTIAALGVAIRNQSIYGFLCTILVGVVFYISATFVETPHLKNIYSNRSYSKINFKNLKSLKN</sequence>
<proteinExistence type="inferred from homology"/>
<organism>
    <name type="scientific">Dictyostelium discoideum</name>
    <name type="common">Social amoeba</name>
    <dbReference type="NCBI Taxonomy" id="44689"/>
    <lineage>
        <taxon>Eukaryota</taxon>
        <taxon>Amoebozoa</taxon>
        <taxon>Evosea</taxon>
        <taxon>Eumycetozoa</taxon>
        <taxon>Dictyostelia</taxon>
        <taxon>Dictyosteliales</taxon>
        <taxon>Dictyosteliaceae</taxon>
        <taxon>Dictyostelium</taxon>
    </lineage>
</organism>
<accession>Q54H80</accession>
<name>PEMT2_DICDI</name>
<dbReference type="EC" id="2.1.1.17" evidence="1"/>
<dbReference type="EC" id="2.1.1.71" evidence="1"/>
<dbReference type="EMBL" id="AAFI02000147">
    <property type="protein sequence ID" value="EAL62640.1"/>
    <property type="molecule type" value="Genomic_DNA"/>
</dbReference>
<dbReference type="RefSeq" id="XP_636144.1">
    <property type="nucleotide sequence ID" value="XM_631052.1"/>
</dbReference>
<dbReference type="STRING" id="44689.Q54H80"/>
<dbReference type="PaxDb" id="44689-DDB0267052"/>
<dbReference type="EnsemblProtists" id="EAL62640">
    <property type="protein sequence ID" value="EAL62640"/>
    <property type="gene ID" value="DDB_G0289645"/>
</dbReference>
<dbReference type="GeneID" id="8627247"/>
<dbReference type="KEGG" id="ddi:DDB_G0289645"/>
<dbReference type="dictyBase" id="DDB_G0289645">
    <property type="gene designation" value="pemtB"/>
</dbReference>
<dbReference type="VEuPathDB" id="AmoebaDB:DDB_G0289645"/>
<dbReference type="eggNOG" id="KOG4142">
    <property type="taxonomic scope" value="Eukaryota"/>
</dbReference>
<dbReference type="HOGENOM" id="CLU_086119_0_0_1"/>
<dbReference type="InParanoid" id="Q54H80"/>
<dbReference type="OMA" id="FSDPQYV"/>
<dbReference type="PhylomeDB" id="Q54H80"/>
<dbReference type="UniPathway" id="UPA00753"/>
<dbReference type="PRO" id="PR:Q54H80"/>
<dbReference type="Proteomes" id="UP000002195">
    <property type="component" value="Chromosome 5"/>
</dbReference>
<dbReference type="GO" id="GO:0005789">
    <property type="term" value="C:endoplasmic reticulum membrane"/>
    <property type="evidence" value="ECO:0007669"/>
    <property type="project" value="UniProtKB-SubCell"/>
</dbReference>
<dbReference type="GO" id="GO:0031966">
    <property type="term" value="C:mitochondrial membrane"/>
    <property type="evidence" value="ECO:0007669"/>
    <property type="project" value="UniProtKB-SubCell"/>
</dbReference>
<dbReference type="GO" id="GO:0000773">
    <property type="term" value="F:phosphatidyl-N-methylethanolamine N-methyltransferase activity"/>
    <property type="evidence" value="ECO:0007669"/>
    <property type="project" value="UniProtKB-UniRule"/>
</dbReference>
<dbReference type="GO" id="GO:0004608">
    <property type="term" value="F:phosphatidylethanolamine N-methyltransferase activity"/>
    <property type="evidence" value="ECO:0007669"/>
    <property type="project" value="UniProtKB-UniRule"/>
</dbReference>
<dbReference type="GO" id="GO:0032259">
    <property type="term" value="P:methylation"/>
    <property type="evidence" value="ECO:0007669"/>
    <property type="project" value="UniProtKB-KW"/>
</dbReference>
<dbReference type="GO" id="GO:0006656">
    <property type="term" value="P:phosphatidylcholine biosynthetic process"/>
    <property type="evidence" value="ECO:0000318"/>
    <property type="project" value="GO_Central"/>
</dbReference>
<dbReference type="FunFam" id="1.20.120.1630:FF:000024">
    <property type="entry name" value="Phosphatidylethanolamine N-methyltransferase"/>
    <property type="match status" value="1"/>
</dbReference>
<dbReference type="Gene3D" id="1.20.120.1630">
    <property type="match status" value="1"/>
</dbReference>
<dbReference type="HAMAP" id="MF_03216">
    <property type="entry name" value="PLMT"/>
    <property type="match status" value="1"/>
</dbReference>
<dbReference type="InterPro" id="IPR024960">
    <property type="entry name" value="PEMT/MFAP"/>
</dbReference>
<dbReference type="InterPro" id="IPR007318">
    <property type="entry name" value="Phopholipid_MeTrfase"/>
</dbReference>
<dbReference type="PANTHER" id="PTHR15458">
    <property type="entry name" value="PHOSPHATIDYLETHANOLAMINE N-METHYLTRANSFERASE"/>
    <property type="match status" value="1"/>
</dbReference>
<dbReference type="PANTHER" id="PTHR15458:SF11">
    <property type="entry name" value="PHOSPHATIDYLETHANOLAMINE N-METHYLTRANSFERASE B"/>
    <property type="match status" value="1"/>
</dbReference>
<dbReference type="Pfam" id="PF04191">
    <property type="entry name" value="PEMT"/>
    <property type="match status" value="1"/>
</dbReference>
<dbReference type="PIRSF" id="PIRSF005444">
    <property type="entry name" value="PEMT"/>
    <property type="match status" value="1"/>
</dbReference>
<dbReference type="PROSITE" id="PS51599">
    <property type="entry name" value="SAM_PEMT_PEM2"/>
    <property type="match status" value="1"/>
</dbReference>
<evidence type="ECO:0000255" key="1">
    <source>
        <dbReference type="HAMAP-Rule" id="MF_03216"/>
    </source>
</evidence>
<reference key="1">
    <citation type="journal article" date="2005" name="Nature">
        <title>The genome of the social amoeba Dictyostelium discoideum.</title>
        <authorList>
            <person name="Eichinger L."/>
            <person name="Pachebat J.A."/>
            <person name="Gloeckner G."/>
            <person name="Rajandream M.A."/>
            <person name="Sucgang R."/>
            <person name="Berriman M."/>
            <person name="Song J."/>
            <person name="Olsen R."/>
            <person name="Szafranski K."/>
            <person name="Xu Q."/>
            <person name="Tunggal B."/>
            <person name="Kummerfeld S."/>
            <person name="Madera M."/>
            <person name="Konfortov B.A."/>
            <person name="Rivero F."/>
            <person name="Bankier A.T."/>
            <person name="Lehmann R."/>
            <person name="Hamlin N."/>
            <person name="Davies R."/>
            <person name="Gaudet P."/>
            <person name="Fey P."/>
            <person name="Pilcher K."/>
            <person name="Chen G."/>
            <person name="Saunders D."/>
            <person name="Sodergren E.J."/>
            <person name="Davis P."/>
            <person name="Kerhornou A."/>
            <person name="Nie X."/>
            <person name="Hall N."/>
            <person name="Anjard C."/>
            <person name="Hemphill L."/>
            <person name="Bason N."/>
            <person name="Farbrother P."/>
            <person name="Desany B."/>
            <person name="Just E."/>
            <person name="Morio T."/>
            <person name="Rost R."/>
            <person name="Churcher C.M."/>
            <person name="Cooper J."/>
            <person name="Haydock S."/>
            <person name="van Driessche N."/>
            <person name="Cronin A."/>
            <person name="Goodhead I."/>
            <person name="Muzny D.M."/>
            <person name="Mourier T."/>
            <person name="Pain A."/>
            <person name="Lu M."/>
            <person name="Harper D."/>
            <person name="Lindsay R."/>
            <person name="Hauser H."/>
            <person name="James K.D."/>
            <person name="Quiles M."/>
            <person name="Madan Babu M."/>
            <person name="Saito T."/>
            <person name="Buchrieser C."/>
            <person name="Wardroper A."/>
            <person name="Felder M."/>
            <person name="Thangavelu M."/>
            <person name="Johnson D."/>
            <person name="Knights A."/>
            <person name="Loulseged H."/>
            <person name="Mungall K.L."/>
            <person name="Oliver K."/>
            <person name="Price C."/>
            <person name="Quail M.A."/>
            <person name="Urushihara H."/>
            <person name="Hernandez J."/>
            <person name="Rabbinowitsch E."/>
            <person name="Steffen D."/>
            <person name="Sanders M."/>
            <person name="Ma J."/>
            <person name="Kohara Y."/>
            <person name="Sharp S."/>
            <person name="Simmonds M.N."/>
            <person name="Spiegler S."/>
            <person name="Tivey A."/>
            <person name="Sugano S."/>
            <person name="White B."/>
            <person name="Walker D."/>
            <person name="Woodward J.R."/>
            <person name="Winckler T."/>
            <person name="Tanaka Y."/>
            <person name="Shaulsky G."/>
            <person name="Schleicher M."/>
            <person name="Weinstock G.M."/>
            <person name="Rosenthal A."/>
            <person name="Cox E.C."/>
            <person name="Chisholm R.L."/>
            <person name="Gibbs R.A."/>
            <person name="Loomis W.F."/>
            <person name="Platzer M."/>
            <person name="Kay R.R."/>
            <person name="Williams J.G."/>
            <person name="Dear P.H."/>
            <person name="Noegel A.A."/>
            <person name="Barrell B.G."/>
            <person name="Kuspa A."/>
        </authorList>
    </citation>
    <scope>NUCLEOTIDE SEQUENCE [LARGE SCALE GENOMIC DNA]</scope>
    <source>
        <strain>AX4</strain>
    </source>
</reference>
<comment type="function">
    <text evidence="1">Catalyzes the three sequential steps of the methylation pathway of phosphatidylcholine biosynthesis, the SAM-dependent methylation of phosphatidylethanolamine (PE) to phosphatidylmonomethylethanolamine (PMME), PMME to phosphatidyldimethylethanolamine (PDME), and PDME to phosphatidylcholine (PC).</text>
</comment>
<comment type="catalytic activity">
    <reaction evidence="1">
        <text>a 1,2-diacyl-sn-glycero-3-phospho-N-methylethanolamine + S-adenosyl-L-methionine = a 1,2-diacyl-sn-glycero-3-phospho-N,N-dimethylethanolamine + S-adenosyl-L-homocysteine + H(+)</text>
        <dbReference type="Rhea" id="RHEA:32735"/>
        <dbReference type="ChEBI" id="CHEBI:15378"/>
        <dbReference type="ChEBI" id="CHEBI:57856"/>
        <dbReference type="ChEBI" id="CHEBI:59789"/>
        <dbReference type="ChEBI" id="CHEBI:64572"/>
        <dbReference type="ChEBI" id="CHEBI:64573"/>
        <dbReference type="EC" id="2.1.1.71"/>
    </reaction>
</comment>
<comment type="catalytic activity">
    <reaction evidence="1">
        <text>a 1,2-diacyl-sn-glycero-3-phospho-N,N-dimethylethanolamine + S-adenosyl-L-methionine = a 1,2-diacyl-sn-glycero-3-phosphocholine + S-adenosyl-L-homocysteine + H(+)</text>
        <dbReference type="Rhea" id="RHEA:32739"/>
        <dbReference type="ChEBI" id="CHEBI:15378"/>
        <dbReference type="ChEBI" id="CHEBI:57643"/>
        <dbReference type="ChEBI" id="CHEBI:57856"/>
        <dbReference type="ChEBI" id="CHEBI:59789"/>
        <dbReference type="ChEBI" id="CHEBI:64572"/>
        <dbReference type="EC" id="2.1.1.71"/>
    </reaction>
</comment>
<comment type="catalytic activity">
    <reaction evidence="1">
        <text>a 1,2-diacyl-sn-glycero-3-phosphoethanolamine + S-adenosyl-L-methionine = a 1,2-diacyl-sn-glycero-3-phospho-N-methylethanolamine + S-adenosyl-L-homocysteine + H(+)</text>
        <dbReference type="Rhea" id="RHEA:11164"/>
        <dbReference type="ChEBI" id="CHEBI:15378"/>
        <dbReference type="ChEBI" id="CHEBI:57856"/>
        <dbReference type="ChEBI" id="CHEBI:59789"/>
        <dbReference type="ChEBI" id="CHEBI:64573"/>
        <dbReference type="ChEBI" id="CHEBI:64612"/>
        <dbReference type="EC" id="2.1.1.17"/>
    </reaction>
</comment>
<comment type="pathway">
    <text evidence="1">Phospholipid metabolism; phosphatidylcholine biosynthesis.</text>
</comment>
<comment type="subcellular location">
    <subcellularLocation>
        <location evidence="1">Endoplasmic reticulum membrane</location>
        <topology evidence="1">Multi-pass membrane protein</topology>
    </subcellularLocation>
    <subcellularLocation>
        <location evidence="1">Mitochondrion membrane</location>
        <topology evidence="1">Multi-pass membrane protein</topology>
    </subcellularLocation>
</comment>
<comment type="similarity">
    <text evidence="1">Belongs to the class VI-like SAM-binding methyltransferase superfamily. PEMT/PEM2 methyltransferase family.</text>
</comment>
<protein>
    <recommendedName>
        <fullName evidence="1">Phosphatidylethanolamine N-methyltransferase B</fullName>
        <shortName evidence="1">PEAMT</shortName>
        <shortName evidence="1">PEMT</shortName>
        <ecNumber evidence="1">2.1.1.17</ecNumber>
        <ecNumber evidence="1">2.1.1.71</ecNumber>
    </recommendedName>
    <alternativeName>
        <fullName evidence="1">Phospholipid methyltransferase B</fullName>
        <shortName evidence="1">PLMT</shortName>
    </alternativeName>
</protein>
<keyword id="KW-0256">Endoplasmic reticulum</keyword>
<keyword id="KW-0444">Lipid biosynthesis</keyword>
<keyword id="KW-0443">Lipid metabolism</keyword>
<keyword id="KW-0472">Membrane</keyword>
<keyword id="KW-0489">Methyltransferase</keyword>
<keyword id="KW-0496">Mitochondrion</keyword>
<keyword id="KW-0594">Phospholipid biosynthesis</keyword>
<keyword id="KW-1208">Phospholipid metabolism</keyword>
<keyword id="KW-1185">Reference proteome</keyword>
<keyword id="KW-0949">S-adenosyl-L-methionine</keyword>
<keyword id="KW-0808">Transferase</keyword>
<keyword id="KW-0812">Transmembrane</keyword>
<keyword id="KW-1133">Transmembrane helix</keyword>
<feature type="chain" id="PRO_0000328072" description="Phosphatidylethanolamine N-methyltransferase B">
    <location>
        <begin position="1"/>
        <end position="200"/>
    </location>
</feature>
<feature type="topological domain" description="Lumenal" evidence="1">
    <location>
        <begin position="1"/>
        <end position="8"/>
    </location>
</feature>
<feature type="intramembrane region" description="Helical" evidence="1">
    <location>
        <begin position="9"/>
        <end position="29"/>
    </location>
</feature>
<feature type="topological domain" description="Lumenal" evidence="1">
    <location>
        <begin position="30"/>
        <end position="39"/>
    </location>
</feature>
<feature type="transmembrane region" description="Helical" evidence="1">
    <location>
        <begin position="40"/>
        <end position="58"/>
    </location>
</feature>
<feature type="topological domain" description="Cytoplasmic" evidence="1">
    <location>
        <begin position="59"/>
        <end position="86"/>
    </location>
</feature>
<feature type="transmembrane region" description="Helical" evidence="1">
    <location>
        <begin position="87"/>
        <end position="107"/>
    </location>
</feature>
<feature type="topological domain" description="Lumenal" evidence="1">
    <location>
        <begin position="108"/>
        <end position="150"/>
    </location>
</feature>
<feature type="transmembrane region" description="Helical" evidence="1">
    <location>
        <begin position="151"/>
        <end position="171"/>
    </location>
</feature>
<feature type="topological domain" description="Cytoplasmic" evidence="1">
    <location>
        <begin position="172"/>
        <end position="200"/>
    </location>
</feature>
<feature type="binding site" evidence="1">
    <location>
        <begin position="91"/>
        <end position="93"/>
    </location>
    <ligand>
        <name>S-adenosyl-L-methionine</name>
        <dbReference type="ChEBI" id="CHEBI:59789"/>
    </ligand>
</feature>
<feature type="binding site" evidence="1">
    <location>
        <begin position="174"/>
        <end position="175"/>
    </location>
    <ligand>
        <name>S-adenosyl-L-methionine</name>
        <dbReference type="ChEBI" id="CHEBI:59789"/>
    </ligand>
</feature>